<keyword id="KW-0106">Calcium</keyword>
<keyword id="KW-1015">Disulfide bond</keyword>
<keyword id="KW-0430">Lectin</keyword>
<keyword id="KW-0479">Metal-binding</keyword>
<keyword id="KW-0964">Secreted</keyword>
<keyword id="KW-0732">Signal</keyword>
<protein>
    <recommendedName>
        <fullName>C-type lectin lectoxin-Lio2</fullName>
        <shortName>CTL</shortName>
    </recommendedName>
</protein>
<comment type="function">
    <text evidence="1">Mannose-binding lectin which recognizes specific carbohydrate structures and agglutinates a variety of animal cells by binding to cell-surface glycoproteins and glycolipids. May be a calcium-dependent lectin (By similarity).</text>
</comment>
<comment type="subcellular location">
    <subcellularLocation>
        <location evidence="1">Secreted</location>
    </subcellularLocation>
</comment>
<comment type="tissue specificity">
    <text>Expressed by the venom gland.</text>
</comment>
<comment type="similarity">
    <text evidence="4">Belongs to the true venom lectin family.</text>
</comment>
<evidence type="ECO:0000250" key="1"/>
<evidence type="ECO:0000255" key="2"/>
<evidence type="ECO:0000255" key="3">
    <source>
        <dbReference type="PROSITE-ProRule" id="PRU00040"/>
    </source>
</evidence>
<evidence type="ECO:0000305" key="4"/>
<proteinExistence type="evidence at transcript level"/>
<feature type="signal peptide" evidence="2">
    <location>
        <begin position="1"/>
        <end position="21"/>
    </location>
</feature>
<feature type="chain" id="PRO_0000355281" description="C-type lectin lectoxin-Lio2">
    <location>
        <begin position="22"/>
        <end position="163"/>
    </location>
</feature>
<feature type="domain" description="C-type lectin" evidence="3">
    <location>
        <begin position="32"/>
        <end position="153"/>
    </location>
</feature>
<feature type="short sequence motif" description="Mannose-binding">
    <location>
        <begin position="117"/>
        <end position="119"/>
    </location>
</feature>
<feature type="binding site" evidence="1">
    <location>
        <position position="125"/>
    </location>
    <ligand>
        <name>Ca(2+)</name>
        <dbReference type="ChEBI" id="CHEBI:29108"/>
    </ligand>
</feature>
<feature type="binding site" evidence="1">
    <location>
        <position position="141"/>
    </location>
    <ligand>
        <name>Ca(2+)</name>
        <dbReference type="ChEBI" id="CHEBI:29108"/>
    </ligand>
</feature>
<feature type="disulfide bond" evidence="3">
    <location>
        <begin position="25"/>
        <end position="36"/>
    </location>
</feature>
<feature type="disulfide bond" evidence="3">
    <location>
        <begin position="53"/>
        <end position="152"/>
    </location>
</feature>
<feature type="disulfide bond" evidence="3">
    <location>
        <begin position="127"/>
        <end position="144"/>
    </location>
</feature>
<sequence length="163" mass="18820">MERFIFAALLVVALSLSGTGADPQCLPGWSSSDGYCYKVFKEYKRWDDAEMFCRQEVEGGHLVSIHSKTEAKFLARLVFRKFILLNVWIGLSSPGKHGIWRWSDGSSFYYTSWAFGEPNNFLWNEYCVGLMSITGHRKWSDQNCRSKRYFICKAQPQSEGSTW</sequence>
<accession>A7X3Z7</accession>
<dbReference type="EMBL" id="EU029698">
    <property type="protein sequence ID" value="ABU68498.1"/>
    <property type="molecule type" value="mRNA"/>
</dbReference>
<dbReference type="SMR" id="A7X3Z7"/>
<dbReference type="GO" id="GO:0005576">
    <property type="term" value="C:extracellular region"/>
    <property type="evidence" value="ECO:0007669"/>
    <property type="project" value="UniProtKB-SubCell"/>
</dbReference>
<dbReference type="GO" id="GO:0030246">
    <property type="term" value="F:carbohydrate binding"/>
    <property type="evidence" value="ECO:0007669"/>
    <property type="project" value="UniProtKB-KW"/>
</dbReference>
<dbReference type="GO" id="GO:0046872">
    <property type="term" value="F:metal ion binding"/>
    <property type="evidence" value="ECO:0007669"/>
    <property type="project" value="UniProtKB-KW"/>
</dbReference>
<dbReference type="FunFam" id="3.10.100.10:FF:000087">
    <property type="entry name" value="Snaclec rhodocetin subunit delta"/>
    <property type="match status" value="1"/>
</dbReference>
<dbReference type="Gene3D" id="3.10.100.10">
    <property type="entry name" value="Mannose-Binding Protein A, subunit A"/>
    <property type="match status" value="1"/>
</dbReference>
<dbReference type="InterPro" id="IPR001304">
    <property type="entry name" value="C-type_lectin-like"/>
</dbReference>
<dbReference type="InterPro" id="IPR016186">
    <property type="entry name" value="C-type_lectin-like/link_sf"/>
</dbReference>
<dbReference type="InterPro" id="IPR050111">
    <property type="entry name" value="C-type_lectin/snaclec_domain"/>
</dbReference>
<dbReference type="InterPro" id="IPR018378">
    <property type="entry name" value="C-type_lectin_CS"/>
</dbReference>
<dbReference type="InterPro" id="IPR016187">
    <property type="entry name" value="CTDL_fold"/>
</dbReference>
<dbReference type="PANTHER" id="PTHR22803">
    <property type="entry name" value="MANNOSE, PHOSPHOLIPASE, LECTIN RECEPTOR RELATED"/>
    <property type="match status" value="1"/>
</dbReference>
<dbReference type="Pfam" id="PF00059">
    <property type="entry name" value="Lectin_C"/>
    <property type="match status" value="1"/>
</dbReference>
<dbReference type="PRINTS" id="PR01504">
    <property type="entry name" value="PNCREATITSAP"/>
</dbReference>
<dbReference type="SMART" id="SM00034">
    <property type="entry name" value="CLECT"/>
    <property type="match status" value="1"/>
</dbReference>
<dbReference type="SUPFAM" id="SSF56436">
    <property type="entry name" value="C-type lectin-like"/>
    <property type="match status" value="1"/>
</dbReference>
<dbReference type="PROSITE" id="PS00615">
    <property type="entry name" value="C_TYPE_LECTIN_1"/>
    <property type="match status" value="1"/>
</dbReference>
<dbReference type="PROSITE" id="PS50041">
    <property type="entry name" value="C_TYPE_LECTIN_2"/>
    <property type="match status" value="1"/>
</dbReference>
<name>LECM2_ERYPO</name>
<reference key="1">
    <citation type="journal article" date="2008" name="Mol. Cell. Proteomics">
        <title>Evolution of an arsenal: structural and functional diversification of the venom system in the advanced snakes (Caenophidia).</title>
        <authorList>
            <person name="Fry B.G."/>
            <person name="Scheib H."/>
            <person name="van der Weerd L."/>
            <person name="Young B."/>
            <person name="McNaughtan J."/>
            <person name="Ramjan S.F.R."/>
            <person name="Vidal N."/>
            <person name="Poelmann R.E."/>
            <person name="Norman J.A."/>
        </authorList>
    </citation>
    <scope>NUCLEOTIDE SEQUENCE [MRNA]</scope>
    <source>
        <tissue>Venom gland</tissue>
    </source>
</reference>
<organism>
    <name type="scientific">Erythrolamprus poecilogyrus</name>
    <name type="common">Water snake</name>
    <name type="synonym">Liophis poecilogyrus</name>
    <dbReference type="NCBI Taxonomy" id="338838"/>
    <lineage>
        <taxon>Eukaryota</taxon>
        <taxon>Metazoa</taxon>
        <taxon>Chordata</taxon>
        <taxon>Craniata</taxon>
        <taxon>Vertebrata</taxon>
        <taxon>Euteleostomi</taxon>
        <taxon>Lepidosauria</taxon>
        <taxon>Squamata</taxon>
        <taxon>Bifurcata</taxon>
        <taxon>Unidentata</taxon>
        <taxon>Episquamata</taxon>
        <taxon>Toxicofera</taxon>
        <taxon>Serpentes</taxon>
        <taxon>Colubroidea</taxon>
        <taxon>Dipsadidae</taxon>
        <taxon>Erythrolamprus</taxon>
    </lineage>
</organism>